<protein>
    <recommendedName>
        <fullName evidence="7">DUF724 domain-containing protein 7</fullName>
        <shortName evidence="5">AtDUF7</shortName>
    </recommendedName>
    <alternativeName>
        <fullName evidence="6">ABAP1-interacting protein 1</fullName>
    </alternativeName>
</protein>
<proteinExistence type="evidence at protein level"/>
<feature type="chain" id="PRO_0000436425" description="DUF724 domain-containing protein 7">
    <location>
        <begin position="1"/>
        <end position="722"/>
    </location>
</feature>
<feature type="domain" description="DUF724" evidence="1">
    <location>
        <begin position="540"/>
        <end position="720"/>
    </location>
</feature>
<feature type="region of interest" description="Disordered" evidence="2">
    <location>
        <begin position="424"/>
        <end position="449"/>
    </location>
</feature>
<feature type="coiled-coil region" evidence="1">
    <location>
        <begin position="645"/>
        <end position="712"/>
    </location>
</feature>
<feature type="compositionally biased region" description="Polar residues" evidence="2">
    <location>
        <begin position="434"/>
        <end position="444"/>
    </location>
</feature>
<feature type="sequence conflict" description="In Ref. 4; BAH20243." evidence="7" ref="4">
    <original>N</original>
    <variation>Y</variation>
    <location>
        <position position="452"/>
    </location>
</feature>
<accession>Q8H0V4</accession>
<accession>B9DHM6</accession>
<accession>Q9M1P4</accession>
<keyword id="KW-0025">Alternative splicing</keyword>
<keyword id="KW-0175">Coiled coil</keyword>
<keyword id="KW-0287">Flowering</keyword>
<keyword id="KW-0341">Growth regulation</keyword>
<keyword id="KW-0539">Nucleus</keyword>
<keyword id="KW-1185">Reference proteome</keyword>
<keyword id="KW-0813">Transport</keyword>
<dbReference type="EMBL" id="AL138651">
    <property type="protein sequence ID" value="CAB71890.1"/>
    <property type="status" value="ALT_SEQ"/>
    <property type="molecule type" value="Genomic_DNA"/>
</dbReference>
<dbReference type="EMBL" id="CP002686">
    <property type="protein sequence ID" value="AEE80335.1"/>
    <property type="molecule type" value="Genomic_DNA"/>
</dbReference>
<dbReference type="EMBL" id="BT002019">
    <property type="protein sequence ID" value="AAN72030.1"/>
    <property type="molecule type" value="mRNA"/>
</dbReference>
<dbReference type="EMBL" id="AK317579">
    <property type="protein sequence ID" value="BAH20243.1"/>
    <property type="molecule type" value="mRNA"/>
</dbReference>
<dbReference type="PIR" id="T48022">
    <property type="entry name" value="T48022"/>
</dbReference>
<dbReference type="RefSeq" id="NP_191789.2">
    <molecule id="Q8H0V4-1"/>
    <property type="nucleotide sequence ID" value="NM_116095.3"/>
</dbReference>
<dbReference type="SMR" id="Q8H0V4"/>
<dbReference type="FunCoup" id="Q8H0V4">
    <property type="interactions" value="1004"/>
</dbReference>
<dbReference type="STRING" id="3702.Q8H0V4"/>
<dbReference type="iPTMnet" id="Q8H0V4"/>
<dbReference type="PaxDb" id="3702-AT3G62300.2"/>
<dbReference type="ProteomicsDB" id="222225">
    <molecule id="Q8H0V4-1"/>
</dbReference>
<dbReference type="EnsemblPlants" id="AT3G62300.1">
    <molecule id="Q8H0V4-1"/>
    <property type="protein sequence ID" value="AT3G62300.1"/>
    <property type="gene ID" value="AT3G62300"/>
</dbReference>
<dbReference type="GeneID" id="825403"/>
<dbReference type="Gramene" id="AT3G62300.1">
    <molecule id="Q8H0V4-1"/>
    <property type="protein sequence ID" value="AT3G62300.1"/>
    <property type="gene ID" value="AT3G62300"/>
</dbReference>
<dbReference type="KEGG" id="ath:AT3G62300"/>
<dbReference type="Araport" id="AT3G62300"/>
<dbReference type="TAIR" id="AT3G62300">
    <property type="gene designation" value="DUF7"/>
</dbReference>
<dbReference type="eggNOG" id="ENOG502QTQX">
    <property type="taxonomic scope" value="Eukaryota"/>
</dbReference>
<dbReference type="HOGENOM" id="CLU_007138_1_0_1"/>
<dbReference type="InParanoid" id="Q8H0V4"/>
<dbReference type="PhylomeDB" id="Q8H0V4"/>
<dbReference type="PRO" id="PR:Q8H0V4"/>
<dbReference type="Proteomes" id="UP000006548">
    <property type="component" value="Chromosome 3"/>
</dbReference>
<dbReference type="ExpressionAtlas" id="Q8H0V4">
    <property type="expression patterns" value="baseline and differential"/>
</dbReference>
<dbReference type="GO" id="GO:0005634">
    <property type="term" value="C:nucleus"/>
    <property type="evidence" value="ECO:0000314"/>
    <property type="project" value="UniProtKB"/>
</dbReference>
<dbReference type="GO" id="GO:0042803">
    <property type="term" value="F:protein homodimerization activity"/>
    <property type="evidence" value="ECO:0000353"/>
    <property type="project" value="UniProtKB"/>
</dbReference>
<dbReference type="GO" id="GO:0009908">
    <property type="term" value="P:flower development"/>
    <property type="evidence" value="ECO:0007669"/>
    <property type="project" value="UniProtKB-KW"/>
</dbReference>
<dbReference type="CDD" id="cd20406">
    <property type="entry name" value="Tudor_Agenet_AtDUF_rpt2_4"/>
    <property type="match status" value="2"/>
</dbReference>
<dbReference type="InterPro" id="IPR008395">
    <property type="entry name" value="Agenet-like_dom"/>
</dbReference>
<dbReference type="InterPro" id="IPR014002">
    <property type="entry name" value="Agenet_dom_plant"/>
</dbReference>
<dbReference type="InterPro" id="IPR007930">
    <property type="entry name" value="DUF724"/>
</dbReference>
<dbReference type="PANTHER" id="PTHR31917">
    <property type="entry name" value="AGENET DOMAIN-CONTAINING PROTEIN-RELATED"/>
    <property type="match status" value="1"/>
</dbReference>
<dbReference type="PANTHER" id="PTHR31917:SF136">
    <property type="entry name" value="DUF724 DOMAIN-CONTAINING PROTEIN 7"/>
    <property type="match status" value="1"/>
</dbReference>
<dbReference type="Pfam" id="PF05641">
    <property type="entry name" value="Agenet"/>
    <property type="match status" value="2"/>
</dbReference>
<dbReference type="Pfam" id="PF05266">
    <property type="entry name" value="DUF724"/>
    <property type="match status" value="1"/>
</dbReference>
<dbReference type="SMART" id="SM00743">
    <property type="entry name" value="Agenet"/>
    <property type="match status" value="4"/>
</dbReference>
<reference key="1">
    <citation type="journal article" date="2000" name="Nature">
        <title>Sequence and analysis of chromosome 3 of the plant Arabidopsis thaliana.</title>
        <authorList>
            <person name="Salanoubat M."/>
            <person name="Lemcke K."/>
            <person name="Rieger M."/>
            <person name="Ansorge W."/>
            <person name="Unseld M."/>
            <person name="Fartmann B."/>
            <person name="Valle G."/>
            <person name="Bloecker H."/>
            <person name="Perez-Alonso M."/>
            <person name="Obermaier B."/>
            <person name="Delseny M."/>
            <person name="Boutry M."/>
            <person name="Grivell L.A."/>
            <person name="Mache R."/>
            <person name="Puigdomenech P."/>
            <person name="De Simone V."/>
            <person name="Choisne N."/>
            <person name="Artiguenave F."/>
            <person name="Robert C."/>
            <person name="Brottier P."/>
            <person name="Wincker P."/>
            <person name="Cattolico L."/>
            <person name="Weissenbach J."/>
            <person name="Saurin W."/>
            <person name="Quetier F."/>
            <person name="Schaefer M."/>
            <person name="Mueller-Auer S."/>
            <person name="Gabel C."/>
            <person name="Fuchs M."/>
            <person name="Benes V."/>
            <person name="Wurmbach E."/>
            <person name="Drzonek H."/>
            <person name="Erfle H."/>
            <person name="Jordan N."/>
            <person name="Bangert S."/>
            <person name="Wiedelmann R."/>
            <person name="Kranz H."/>
            <person name="Voss H."/>
            <person name="Holland R."/>
            <person name="Brandt P."/>
            <person name="Nyakatura G."/>
            <person name="Vezzi A."/>
            <person name="D'Angelo M."/>
            <person name="Pallavicini A."/>
            <person name="Toppo S."/>
            <person name="Simionati B."/>
            <person name="Conrad A."/>
            <person name="Hornischer K."/>
            <person name="Kauer G."/>
            <person name="Loehnert T.-H."/>
            <person name="Nordsiek G."/>
            <person name="Reichelt J."/>
            <person name="Scharfe M."/>
            <person name="Schoen O."/>
            <person name="Bargues M."/>
            <person name="Terol J."/>
            <person name="Climent J."/>
            <person name="Navarro P."/>
            <person name="Collado C."/>
            <person name="Perez-Perez A."/>
            <person name="Ottenwaelder B."/>
            <person name="Duchemin D."/>
            <person name="Cooke R."/>
            <person name="Laudie M."/>
            <person name="Berger-Llauro C."/>
            <person name="Purnelle B."/>
            <person name="Masuy D."/>
            <person name="de Haan M."/>
            <person name="Maarse A.C."/>
            <person name="Alcaraz J.-P."/>
            <person name="Cottet A."/>
            <person name="Casacuberta E."/>
            <person name="Monfort A."/>
            <person name="Argiriou A."/>
            <person name="Flores M."/>
            <person name="Liguori R."/>
            <person name="Vitale D."/>
            <person name="Mannhaupt G."/>
            <person name="Haase D."/>
            <person name="Schoof H."/>
            <person name="Rudd S."/>
            <person name="Zaccaria P."/>
            <person name="Mewes H.-W."/>
            <person name="Mayer K.F.X."/>
            <person name="Kaul S."/>
            <person name="Town C.D."/>
            <person name="Koo H.L."/>
            <person name="Tallon L.J."/>
            <person name="Jenkins J."/>
            <person name="Rooney T."/>
            <person name="Rizzo M."/>
            <person name="Walts A."/>
            <person name="Utterback T."/>
            <person name="Fujii C.Y."/>
            <person name="Shea T.P."/>
            <person name="Creasy T.H."/>
            <person name="Haas B."/>
            <person name="Maiti R."/>
            <person name="Wu D."/>
            <person name="Peterson J."/>
            <person name="Van Aken S."/>
            <person name="Pai G."/>
            <person name="Militscher J."/>
            <person name="Sellers P."/>
            <person name="Gill J.E."/>
            <person name="Feldblyum T.V."/>
            <person name="Preuss D."/>
            <person name="Lin X."/>
            <person name="Nierman W.C."/>
            <person name="Salzberg S.L."/>
            <person name="White O."/>
            <person name="Venter J.C."/>
            <person name="Fraser C.M."/>
            <person name="Kaneko T."/>
            <person name="Nakamura Y."/>
            <person name="Sato S."/>
            <person name="Kato T."/>
            <person name="Asamizu E."/>
            <person name="Sasamoto S."/>
            <person name="Kimura T."/>
            <person name="Idesawa K."/>
            <person name="Kawashima K."/>
            <person name="Kishida Y."/>
            <person name="Kiyokawa C."/>
            <person name="Kohara M."/>
            <person name="Matsumoto M."/>
            <person name="Matsuno A."/>
            <person name="Muraki A."/>
            <person name="Nakayama S."/>
            <person name="Nakazaki N."/>
            <person name="Shinpo S."/>
            <person name="Takeuchi C."/>
            <person name="Wada T."/>
            <person name="Watanabe A."/>
            <person name="Yamada M."/>
            <person name="Yasuda M."/>
            <person name="Tabata S."/>
        </authorList>
    </citation>
    <scope>NUCLEOTIDE SEQUENCE [LARGE SCALE GENOMIC DNA]</scope>
    <source>
        <strain>cv. Columbia</strain>
    </source>
</reference>
<reference key="2">
    <citation type="journal article" date="2017" name="Plant J.">
        <title>Araport11: a complete reannotation of the Arabidopsis thaliana reference genome.</title>
        <authorList>
            <person name="Cheng C.Y."/>
            <person name="Krishnakumar V."/>
            <person name="Chan A.P."/>
            <person name="Thibaud-Nissen F."/>
            <person name="Schobel S."/>
            <person name="Town C.D."/>
        </authorList>
    </citation>
    <scope>GENOME REANNOTATION</scope>
    <source>
        <strain>cv. Columbia</strain>
    </source>
</reference>
<reference key="3">
    <citation type="journal article" date="2003" name="Science">
        <title>Empirical analysis of transcriptional activity in the Arabidopsis genome.</title>
        <authorList>
            <person name="Yamada K."/>
            <person name="Lim J."/>
            <person name="Dale J.M."/>
            <person name="Chen H."/>
            <person name="Shinn P."/>
            <person name="Palm C.J."/>
            <person name="Southwick A.M."/>
            <person name="Wu H.C."/>
            <person name="Kim C.J."/>
            <person name="Nguyen M."/>
            <person name="Pham P.K."/>
            <person name="Cheuk R.F."/>
            <person name="Karlin-Newmann G."/>
            <person name="Liu S.X."/>
            <person name="Lam B."/>
            <person name="Sakano H."/>
            <person name="Wu T."/>
            <person name="Yu G."/>
            <person name="Miranda M."/>
            <person name="Quach H.L."/>
            <person name="Tripp M."/>
            <person name="Chang C.H."/>
            <person name="Lee J.M."/>
            <person name="Toriumi M.J."/>
            <person name="Chan M.M."/>
            <person name="Tang C.C."/>
            <person name="Onodera C.S."/>
            <person name="Deng J.M."/>
            <person name="Akiyama K."/>
            <person name="Ansari Y."/>
            <person name="Arakawa T."/>
            <person name="Banh J."/>
            <person name="Banno F."/>
            <person name="Bowser L."/>
            <person name="Brooks S.Y."/>
            <person name="Carninci P."/>
            <person name="Chao Q."/>
            <person name="Choy N."/>
            <person name="Enju A."/>
            <person name="Goldsmith A.D."/>
            <person name="Gurjal M."/>
            <person name="Hansen N.F."/>
            <person name="Hayashizaki Y."/>
            <person name="Johnson-Hopson C."/>
            <person name="Hsuan V.W."/>
            <person name="Iida K."/>
            <person name="Karnes M."/>
            <person name="Khan S."/>
            <person name="Koesema E."/>
            <person name="Ishida J."/>
            <person name="Jiang P.X."/>
            <person name="Jones T."/>
            <person name="Kawai J."/>
            <person name="Kamiya A."/>
            <person name="Meyers C."/>
            <person name="Nakajima M."/>
            <person name="Narusaka M."/>
            <person name="Seki M."/>
            <person name="Sakurai T."/>
            <person name="Satou M."/>
            <person name="Tamse R."/>
            <person name="Vaysberg M."/>
            <person name="Wallender E.K."/>
            <person name="Wong C."/>
            <person name="Yamamura Y."/>
            <person name="Yuan S."/>
            <person name="Shinozaki K."/>
            <person name="Davis R.W."/>
            <person name="Theologis A."/>
            <person name="Ecker J.R."/>
        </authorList>
    </citation>
    <scope>NUCLEOTIDE SEQUENCE [LARGE SCALE MRNA]</scope>
    <source>
        <strain>cv. Columbia</strain>
    </source>
</reference>
<reference key="4">
    <citation type="journal article" date="2009" name="DNA Res.">
        <title>Analysis of multiple occurrences of alternative splicing events in Arabidopsis thaliana using novel sequenced full-length cDNAs.</title>
        <authorList>
            <person name="Iida K."/>
            <person name="Fukami-Kobayashi K."/>
            <person name="Toyoda A."/>
            <person name="Sakaki Y."/>
            <person name="Kobayashi M."/>
            <person name="Seki M."/>
            <person name="Shinozaki K."/>
        </authorList>
    </citation>
    <scope>NUCLEOTIDE SEQUENCE [LARGE SCALE MRNA] OF 262-722</scope>
    <source>
        <strain>cv. Columbia</strain>
    </source>
</reference>
<reference key="5">
    <citation type="journal article" date="2010" name="Plant Mol. Biol.">
        <title>Characterization of DUF724 gene family in Arabidopsis thaliana.</title>
        <authorList>
            <person name="Cao X."/>
            <person name="Yang K.Z."/>
            <person name="Xia C."/>
            <person name="Zhang X.Q."/>
            <person name="Chen L.Q."/>
            <person name="Ye D."/>
        </authorList>
    </citation>
    <scope>FUNCTION</scope>
    <scope>GENE FAMILY</scope>
    <scope>NOMENCLATURE</scope>
    <scope>SUBUNIT</scope>
    <scope>SUBCELLULAR LOCATION</scope>
    <scope>TISSUE SPECIFICITY</scope>
</reference>
<reference key="6">
    <citation type="journal article" date="2015" name="BMC Plant Biol.">
        <title>AIP1 is a novel Agenet/Tudor domain protein from Arabidopsis that interacts with regulators of DNA replication, transcription and chromatin remodeling.</title>
        <authorList>
            <person name="Brasil J.N."/>
            <person name="Cabral L.M."/>
            <person name="Eloy N.B."/>
            <person name="Primo L.M."/>
            <person name="Barroso-Neto I.L."/>
            <person name="Grangeiro L.P."/>
            <person name="Gonzalez N."/>
            <person name="Inze D."/>
            <person name="Ferreira P.C."/>
            <person name="Hemerly A.S."/>
        </authorList>
    </citation>
    <scope>SUBUNIT</scope>
    <scope>INTERACTION WITH ABAP1; ARIA AND LHP1</scope>
    <scope>SUBCELLULAR LOCATION</scope>
    <scope>DEVELOPMENTAL STAGE</scope>
</reference>
<organism>
    <name type="scientific">Arabidopsis thaliana</name>
    <name type="common">Mouse-ear cress</name>
    <dbReference type="NCBI Taxonomy" id="3702"/>
    <lineage>
        <taxon>Eukaryota</taxon>
        <taxon>Viridiplantae</taxon>
        <taxon>Streptophyta</taxon>
        <taxon>Embryophyta</taxon>
        <taxon>Tracheophyta</taxon>
        <taxon>Spermatophyta</taxon>
        <taxon>Magnoliopsida</taxon>
        <taxon>eudicotyledons</taxon>
        <taxon>Gunneridae</taxon>
        <taxon>Pentapetalae</taxon>
        <taxon>rosids</taxon>
        <taxon>malvids</taxon>
        <taxon>Brassicales</taxon>
        <taxon>Brassicaceae</taxon>
        <taxon>Camelineae</taxon>
        <taxon>Arabidopsis</taxon>
    </lineage>
</organism>
<comment type="function">
    <text evidence="4 8">May act as a link between DNA replication, transcription and chromatin remodeling during flower development. May participate in the repression of LHP1-targeted genes during flower development by direct interaction with LHP1 (PubMed:26538092). May be involved in the polar growth of plant cells via transportation of RNAs (Probable).</text>
</comment>
<comment type="subunit">
    <text evidence="3 4">Homodimer (PubMed:19795213, PubMed:26538092). Interacts wtih ABAP1, ARIA and LHP1 (PubMed:26538092). Interacts with the non-modified histones H1, H2B, H3 and H4 (PubMed:26538092).</text>
</comment>
<comment type="subcellular location">
    <subcellularLocation>
        <location evidence="3 4">Nucleus</location>
    </subcellularLocation>
</comment>
<comment type="alternative products">
    <event type="alternative splicing"/>
    <isoform>
        <id>Q8H0V4-1</id>
        <name>1</name>
        <sequence type="displayed"/>
    </isoform>
    <text evidence="7">A number of isoforms are produced. According to EST sequences.</text>
</comment>
<comment type="tissue specificity">
    <text evidence="3">Expressed in roots, leaves, stems and flowers.</text>
</comment>
<comment type="developmental stage">
    <text evidence="4">Expressed during vegetative to reproductive phase of development, with the main expression occurring in early flower development.</text>
</comment>
<comment type="miscellaneous">
    <text evidence="4">Plants with reduced expression of DUF7 show a slight delay in flowering.</text>
</comment>
<comment type="sequence caution" evidence="7">
    <conflict type="erroneous gene model prediction">
        <sequence resource="EMBL-CDS" id="CAB71890"/>
    </conflict>
</comment>
<name>DUF7_ARATH</name>
<gene>
    <name evidence="5" type="primary">DUF7</name>
    <name evidence="6" type="synonym">AIP1</name>
    <name evidence="9" type="ordered locus">At3g62300</name>
    <name evidence="10" type="ORF">T17J13.260</name>
</gene>
<sequence>MLLTTGRKEKLSVSKGSEIEISSQEYEYGSGNVWYCVILEENLAKSKRKKLSVRHLDPLLKYDYSPPLIKTTVHRFMRPVPPPDPFPEVDFEEGDVVDAAYKGGWCSGSVVKVLGNRRFLVYLRFQPDVIELLRKDLRPHFVWKDEEWFRCEKQQLIESDFSAGKSVEVRTKVDKLGDVWAPAMVIKEDEDGTMLVKLKTLKEEEVNCTKISVSYSEIRPSPLPIGLRDYKLMENVDALVESGWCPGVVSKVLAGKRYAVDLGPNRESKEFSRLQLRPSIEWKDGIWHRKEKVSGSEESSHAVEETAASTRIRITVRTALKEKKALGTGINVRTTRSSSGAMHNPLPASFNGGDVAEAGRVSVTVNETPLFETAALSGELGNSLADVVMNESAPVTSQPEIAAPKEFHPSVVLGVAAAVKTQGKTTPKKKLQAMKNQKSSTNDSVGEKVSVNKRKRGQPRKFIVAEPKQKIGVSGNNSKAATIEHADMTDDDRPLASWVHTGNSSSGQSVSRTPDIGLNTVVEKHVDIVETPPGRESTMVLPFVKKSQLWKVLESMEVFKVVPQSPHFSPLLESEEECREGDAIGRMVMFSSLLEKVNNLQVDDPISSINRIDECFLKLEKHGFNVTTPRSRIAKILSIKERQTCALEELKAVEEKITENDNKRRKYEEDIVELQRQEVLMKEAKVTLDNEIARMQSQAAVLDQEVQNVDHEFQAILAAPWK</sequence>
<evidence type="ECO:0000255" key="1"/>
<evidence type="ECO:0000256" key="2">
    <source>
        <dbReference type="SAM" id="MobiDB-lite"/>
    </source>
</evidence>
<evidence type="ECO:0000269" key="3">
    <source>
    </source>
</evidence>
<evidence type="ECO:0000269" key="4">
    <source>
    </source>
</evidence>
<evidence type="ECO:0000303" key="5">
    <source>
    </source>
</evidence>
<evidence type="ECO:0000303" key="6">
    <source>
    </source>
</evidence>
<evidence type="ECO:0000305" key="7"/>
<evidence type="ECO:0000305" key="8">
    <source>
    </source>
</evidence>
<evidence type="ECO:0000312" key="9">
    <source>
        <dbReference type="Araport" id="AT3G62300"/>
    </source>
</evidence>
<evidence type="ECO:0000312" key="10">
    <source>
        <dbReference type="EMBL" id="CAB71890.1"/>
    </source>
</evidence>